<protein>
    <recommendedName>
        <fullName evidence="1">3-deoxy-manno-octulosonate cytidylyltransferase</fullName>
        <ecNumber evidence="1">2.7.7.38</ecNumber>
    </recommendedName>
    <alternativeName>
        <fullName evidence="1">CMP-2-keto-3-deoxyoctulosonic acid synthase</fullName>
        <shortName evidence="1">CKS</shortName>
        <shortName evidence="1">CMP-KDO synthase</shortName>
    </alternativeName>
</protein>
<accession>Q7MTW6</accession>
<proteinExistence type="inferred from homology"/>
<name>KDSB_PORGI</name>
<evidence type="ECO:0000255" key="1">
    <source>
        <dbReference type="HAMAP-Rule" id="MF_00057"/>
    </source>
</evidence>
<organism>
    <name type="scientific">Porphyromonas gingivalis (strain ATCC BAA-308 / W83)</name>
    <dbReference type="NCBI Taxonomy" id="242619"/>
    <lineage>
        <taxon>Bacteria</taxon>
        <taxon>Pseudomonadati</taxon>
        <taxon>Bacteroidota</taxon>
        <taxon>Bacteroidia</taxon>
        <taxon>Bacteroidales</taxon>
        <taxon>Porphyromonadaceae</taxon>
        <taxon>Porphyromonas</taxon>
    </lineage>
</organism>
<keyword id="KW-0963">Cytoplasm</keyword>
<keyword id="KW-0448">Lipopolysaccharide biosynthesis</keyword>
<keyword id="KW-0548">Nucleotidyltransferase</keyword>
<keyword id="KW-1185">Reference proteome</keyword>
<keyword id="KW-0808">Transferase</keyword>
<reference key="1">
    <citation type="journal article" date="2003" name="J. Bacteriol.">
        <title>Complete genome sequence of the oral pathogenic bacterium Porphyromonas gingivalis strain W83.</title>
        <authorList>
            <person name="Nelson K.E."/>
            <person name="Fleischmann R.D."/>
            <person name="DeBoy R.T."/>
            <person name="Paulsen I.T."/>
            <person name="Fouts D.E."/>
            <person name="Eisen J.A."/>
            <person name="Daugherty S.C."/>
            <person name="Dodson R.J."/>
            <person name="Durkin A.S."/>
            <person name="Gwinn M.L."/>
            <person name="Haft D.H."/>
            <person name="Kolonay J.F."/>
            <person name="Nelson W.C."/>
            <person name="Mason T.M."/>
            <person name="Tallon L."/>
            <person name="Gray J."/>
            <person name="Granger D."/>
            <person name="Tettelin H."/>
            <person name="Dong H."/>
            <person name="Galvin J.L."/>
            <person name="Duncan M.J."/>
            <person name="Dewhirst F.E."/>
            <person name="Fraser C.M."/>
        </authorList>
    </citation>
    <scope>NUCLEOTIDE SEQUENCE [LARGE SCALE GENOMIC DNA]</scope>
    <source>
        <strain>ATCC BAA-308 / W83</strain>
    </source>
</reference>
<gene>
    <name evidence="1" type="primary">kdsB</name>
    <name type="ordered locus">PG_1815</name>
</gene>
<sequence length="254" mass="28730">MNTEVIAIIPARFASSRFPGKPLADMLGKSMIQRVHERIVGVVPRAVVATDDERIRQAVEDFGGEVVMTSPECSSGTERCREAFDKVGRGEKIVLNLQGDEPFIQKEQIDLLISAFDKPETDIATLAEVFSSDVSFERLNNPNSPKIVLDHGGYALYFSRSVIPYLRGVQPDSWCRRHTYYKHIGIYAFRPTVLRKITSLPQSTAEQAESLEQLRWLEYGYRIRVLQTQQSTIGIDTPEDMEKAIAYLRSQGME</sequence>
<comment type="function">
    <text evidence="1">Activates KDO (a required 8-carbon sugar) for incorporation into bacterial lipopolysaccharide in Gram-negative bacteria.</text>
</comment>
<comment type="catalytic activity">
    <reaction evidence="1">
        <text>3-deoxy-alpha-D-manno-oct-2-ulosonate + CTP = CMP-3-deoxy-beta-D-manno-octulosonate + diphosphate</text>
        <dbReference type="Rhea" id="RHEA:23448"/>
        <dbReference type="ChEBI" id="CHEBI:33019"/>
        <dbReference type="ChEBI" id="CHEBI:37563"/>
        <dbReference type="ChEBI" id="CHEBI:85986"/>
        <dbReference type="ChEBI" id="CHEBI:85987"/>
        <dbReference type="EC" id="2.7.7.38"/>
    </reaction>
</comment>
<comment type="pathway">
    <text evidence="1">Nucleotide-sugar biosynthesis; CMP-3-deoxy-D-manno-octulosonate biosynthesis; CMP-3-deoxy-D-manno-octulosonate from 3-deoxy-D-manno-octulosonate and CTP: step 1/1.</text>
</comment>
<comment type="pathway">
    <text evidence="1">Bacterial outer membrane biogenesis; lipopolysaccharide biosynthesis.</text>
</comment>
<comment type="subcellular location">
    <subcellularLocation>
        <location evidence="1">Cytoplasm</location>
    </subcellularLocation>
</comment>
<comment type="similarity">
    <text evidence="1">Belongs to the KdsB family.</text>
</comment>
<dbReference type="EC" id="2.7.7.38" evidence="1"/>
<dbReference type="EMBL" id="AE015924">
    <property type="protein sequence ID" value="AAQ66813.1"/>
    <property type="molecule type" value="Genomic_DNA"/>
</dbReference>
<dbReference type="RefSeq" id="WP_004583467.1">
    <property type="nucleotide sequence ID" value="NC_002950.2"/>
</dbReference>
<dbReference type="SMR" id="Q7MTW6"/>
<dbReference type="STRING" id="242619.PG_1815"/>
<dbReference type="EnsemblBacteria" id="AAQ66813">
    <property type="protein sequence ID" value="AAQ66813"/>
    <property type="gene ID" value="PG_1815"/>
</dbReference>
<dbReference type="KEGG" id="pgi:PG_1815"/>
<dbReference type="eggNOG" id="COG1212">
    <property type="taxonomic scope" value="Bacteria"/>
</dbReference>
<dbReference type="HOGENOM" id="CLU_065038_0_1_10"/>
<dbReference type="UniPathway" id="UPA00030"/>
<dbReference type="UniPathway" id="UPA00358">
    <property type="reaction ID" value="UER00476"/>
</dbReference>
<dbReference type="Proteomes" id="UP000000588">
    <property type="component" value="Chromosome"/>
</dbReference>
<dbReference type="GO" id="GO:0005829">
    <property type="term" value="C:cytosol"/>
    <property type="evidence" value="ECO:0007669"/>
    <property type="project" value="TreeGrafter"/>
</dbReference>
<dbReference type="GO" id="GO:0008690">
    <property type="term" value="F:3-deoxy-manno-octulosonate cytidylyltransferase activity"/>
    <property type="evidence" value="ECO:0007669"/>
    <property type="project" value="UniProtKB-UniRule"/>
</dbReference>
<dbReference type="GO" id="GO:0033468">
    <property type="term" value="P:CMP-keto-3-deoxy-D-manno-octulosonic acid biosynthetic process"/>
    <property type="evidence" value="ECO:0007669"/>
    <property type="project" value="UniProtKB-UniRule"/>
</dbReference>
<dbReference type="GO" id="GO:0009103">
    <property type="term" value="P:lipopolysaccharide biosynthetic process"/>
    <property type="evidence" value="ECO:0007669"/>
    <property type="project" value="UniProtKB-UniRule"/>
</dbReference>
<dbReference type="CDD" id="cd02517">
    <property type="entry name" value="CMP-KDO-Synthetase"/>
    <property type="match status" value="1"/>
</dbReference>
<dbReference type="FunFam" id="3.90.550.10:FF:000011">
    <property type="entry name" value="3-deoxy-manno-octulosonate cytidylyltransferase"/>
    <property type="match status" value="1"/>
</dbReference>
<dbReference type="Gene3D" id="3.90.550.10">
    <property type="entry name" value="Spore Coat Polysaccharide Biosynthesis Protein SpsA, Chain A"/>
    <property type="match status" value="1"/>
</dbReference>
<dbReference type="HAMAP" id="MF_00057">
    <property type="entry name" value="KdsB"/>
    <property type="match status" value="1"/>
</dbReference>
<dbReference type="InterPro" id="IPR003329">
    <property type="entry name" value="Cytidylyl_trans"/>
</dbReference>
<dbReference type="InterPro" id="IPR004528">
    <property type="entry name" value="KdsB"/>
</dbReference>
<dbReference type="InterPro" id="IPR029044">
    <property type="entry name" value="Nucleotide-diphossugar_trans"/>
</dbReference>
<dbReference type="NCBIfam" id="TIGR00466">
    <property type="entry name" value="kdsB"/>
    <property type="match status" value="1"/>
</dbReference>
<dbReference type="NCBIfam" id="NF003950">
    <property type="entry name" value="PRK05450.1-3"/>
    <property type="match status" value="1"/>
</dbReference>
<dbReference type="NCBIfam" id="NF003952">
    <property type="entry name" value="PRK05450.1-5"/>
    <property type="match status" value="1"/>
</dbReference>
<dbReference type="NCBIfam" id="NF009905">
    <property type="entry name" value="PRK13368.1"/>
    <property type="match status" value="1"/>
</dbReference>
<dbReference type="PANTHER" id="PTHR42866">
    <property type="entry name" value="3-DEOXY-MANNO-OCTULOSONATE CYTIDYLYLTRANSFERASE"/>
    <property type="match status" value="1"/>
</dbReference>
<dbReference type="PANTHER" id="PTHR42866:SF2">
    <property type="entry name" value="3-DEOXY-MANNO-OCTULOSONATE CYTIDYLYLTRANSFERASE, MITOCHONDRIAL"/>
    <property type="match status" value="1"/>
</dbReference>
<dbReference type="Pfam" id="PF02348">
    <property type="entry name" value="CTP_transf_3"/>
    <property type="match status" value="1"/>
</dbReference>
<dbReference type="SUPFAM" id="SSF53448">
    <property type="entry name" value="Nucleotide-diphospho-sugar transferases"/>
    <property type="match status" value="1"/>
</dbReference>
<feature type="chain" id="PRO_0000370118" description="3-deoxy-manno-octulosonate cytidylyltransferase">
    <location>
        <begin position="1"/>
        <end position="254"/>
    </location>
</feature>